<gene>
    <name evidence="1" type="primary">bioD</name>
    <name type="ordered locus">lpg1475</name>
</gene>
<sequence length="212" mass="23757">MKRYFVTGTDTDCGKTFVTNQLVNYFSDSAAIKPIASGCEYSENQLVNSDALLHQQQNHLPMEIVNPWRFRLPVSPHLSAREDGASIDVHKVADYCLNLQVNDIKKLFIEGAGGLMVPLNEQDTWLDFLKLTRIPVILVVGMKLGCINHTLLSQEVLEINKIKCQGWIANCLDQDMLMLDENISTLEAKLNYPLLARTNYGGKISDICLSSL</sequence>
<evidence type="ECO:0000255" key="1">
    <source>
        <dbReference type="HAMAP-Rule" id="MF_00336"/>
    </source>
</evidence>
<reference key="1">
    <citation type="journal article" date="2004" name="Science">
        <title>The genomic sequence of the accidental pathogen Legionella pneumophila.</title>
        <authorList>
            <person name="Chien M."/>
            <person name="Morozova I."/>
            <person name="Shi S."/>
            <person name="Sheng H."/>
            <person name="Chen J."/>
            <person name="Gomez S.M."/>
            <person name="Asamani G."/>
            <person name="Hill K."/>
            <person name="Nuara J."/>
            <person name="Feder M."/>
            <person name="Rineer J."/>
            <person name="Greenberg J.J."/>
            <person name="Steshenko V."/>
            <person name="Park S.H."/>
            <person name="Zhao B."/>
            <person name="Teplitskaya E."/>
            <person name="Edwards J.R."/>
            <person name="Pampou S."/>
            <person name="Georghiou A."/>
            <person name="Chou I.-C."/>
            <person name="Iannuccilli W."/>
            <person name="Ulz M.E."/>
            <person name="Kim D.H."/>
            <person name="Geringer-Sameth A."/>
            <person name="Goldsberry C."/>
            <person name="Morozov P."/>
            <person name="Fischer S.G."/>
            <person name="Segal G."/>
            <person name="Qu X."/>
            <person name="Rzhetsky A."/>
            <person name="Zhang P."/>
            <person name="Cayanis E."/>
            <person name="De Jong P.J."/>
            <person name="Ju J."/>
            <person name="Kalachikov S."/>
            <person name="Shuman H.A."/>
            <person name="Russo J.J."/>
        </authorList>
    </citation>
    <scope>NUCLEOTIDE SEQUENCE [LARGE SCALE GENOMIC DNA]</scope>
    <source>
        <strain>Philadelphia 1 / ATCC 33152 / DSM 7513</strain>
    </source>
</reference>
<dbReference type="EC" id="6.3.3.3" evidence="1"/>
<dbReference type="EMBL" id="AE017354">
    <property type="protein sequence ID" value="AAU27557.1"/>
    <property type="molecule type" value="Genomic_DNA"/>
</dbReference>
<dbReference type="RefSeq" id="WP_010947204.1">
    <property type="nucleotide sequence ID" value="NC_002942.5"/>
</dbReference>
<dbReference type="RefSeq" id="YP_095504.1">
    <property type="nucleotide sequence ID" value="NC_002942.5"/>
</dbReference>
<dbReference type="SMR" id="Q5ZVG5"/>
<dbReference type="STRING" id="272624.lpg1475"/>
<dbReference type="PaxDb" id="272624-lpg1475"/>
<dbReference type="GeneID" id="57035465"/>
<dbReference type="KEGG" id="lpn:lpg1475"/>
<dbReference type="PATRIC" id="fig|272624.6.peg.1548"/>
<dbReference type="eggNOG" id="COG0132">
    <property type="taxonomic scope" value="Bacteria"/>
</dbReference>
<dbReference type="HOGENOM" id="CLU_072551_0_0_6"/>
<dbReference type="OrthoDB" id="9802097at2"/>
<dbReference type="UniPathway" id="UPA00078">
    <property type="reaction ID" value="UER00161"/>
</dbReference>
<dbReference type="Proteomes" id="UP000000609">
    <property type="component" value="Chromosome"/>
</dbReference>
<dbReference type="GO" id="GO:0005829">
    <property type="term" value="C:cytosol"/>
    <property type="evidence" value="ECO:0007669"/>
    <property type="project" value="TreeGrafter"/>
</dbReference>
<dbReference type="GO" id="GO:0005524">
    <property type="term" value="F:ATP binding"/>
    <property type="evidence" value="ECO:0007669"/>
    <property type="project" value="UniProtKB-UniRule"/>
</dbReference>
<dbReference type="GO" id="GO:0004141">
    <property type="term" value="F:dethiobiotin synthase activity"/>
    <property type="evidence" value="ECO:0007669"/>
    <property type="project" value="UniProtKB-UniRule"/>
</dbReference>
<dbReference type="GO" id="GO:0000287">
    <property type="term" value="F:magnesium ion binding"/>
    <property type="evidence" value="ECO:0007669"/>
    <property type="project" value="UniProtKB-UniRule"/>
</dbReference>
<dbReference type="GO" id="GO:0009102">
    <property type="term" value="P:biotin biosynthetic process"/>
    <property type="evidence" value="ECO:0007669"/>
    <property type="project" value="UniProtKB-UniRule"/>
</dbReference>
<dbReference type="CDD" id="cd03109">
    <property type="entry name" value="DTBS"/>
    <property type="match status" value="1"/>
</dbReference>
<dbReference type="FunFam" id="3.40.50.300:FF:000292">
    <property type="entry name" value="ATP-dependent dethiobiotin synthetase BioD"/>
    <property type="match status" value="1"/>
</dbReference>
<dbReference type="Gene3D" id="3.40.50.300">
    <property type="entry name" value="P-loop containing nucleotide triphosphate hydrolases"/>
    <property type="match status" value="1"/>
</dbReference>
<dbReference type="HAMAP" id="MF_00336">
    <property type="entry name" value="BioD"/>
    <property type="match status" value="1"/>
</dbReference>
<dbReference type="InterPro" id="IPR004472">
    <property type="entry name" value="DTB_synth_BioD"/>
</dbReference>
<dbReference type="InterPro" id="IPR027417">
    <property type="entry name" value="P-loop_NTPase"/>
</dbReference>
<dbReference type="NCBIfam" id="TIGR00347">
    <property type="entry name" value="bioD"/>
    <property type="match status" value="1"/>
</dbReference>
<dbReference type="PANTHER" id="PTHR43210">
    <property type="entry name" value="DETHIOBIOTIN SYNTHETASE"/>
    <property type="match status" value="1"/>
</dbReference>
<dbReference type="PANTHER" id="PTHR43210:SF5">
    <property type="entry name" value="DETHIOBIOTIN SYNTHETASE"/>
    <property type="match status" value="1"/>
</dbReference>
<dbReference type="Pfam" id="PF13500">
    <property type="entry name" value="AAA_26"/>
    <property type="match status" value="1"/>
</dbReference>
<dbReference type="PIRSF" id="PIRSF006755">
    <property type="entry name" value="DTB_synth"/>
    <property type="match status" value="1"/>
</dbReference>
<dbReference type="SUPFAM" id="SSF52540">
    <property type="entry name" value="P-loop containing nucleoside triphosphate hydrolases"/>
    <property type="match status" value="1"/>
</dbReference>
<accession>Q5ZVG5</accession>
<proteinExistence type="inferred from homology"/>
<keyword id="KW-0067">ATP-binding</keyword>
<keyword id="KW-0093">Biotin biosynthesis</keyword>
<keyword id="KW-0963">Cytoplasm</keyword>
<keyword id="KW-0436">Ligase</keyword>
<keyword id="KW-0460">Magnesium</keyword>
<keyword id="KW-0479">Metal-binding</keyword>
<keyword id="KW-0547">Nucleotide-binding</keyword>
<keyword id="KW-1185">Reference proteome</keyword>
<name>BIOD_LEGPH</name>
<protein>
    <recommendedName>
        <fullName evidence="1">ATP-dependent dethiobiotin synthetase BioD</fullName>
        <ecNumber evidence="1">6.3.3.3</ecNumber>
    </recommendedName>
    <alternativeName>
        <fullName evidence="1">DTB synthetase</fullName>
        <shortName evidence="1">DTBS</shortName>
    </alternativeName>
    <alternativeName>
        <fullName evidence="1">Dethiobiotin synthase</fullName>
    </alternativeName>
</protein>
<organism>
    <name type="scientific">Legionella pneumophila subsp. pneumophila (strain Philadelphia 1 / ATCC 33152 / DSM 7513)</name>
    <dbReference type="NCBI Taxonomy" id="272624"/>
    <lineage>
        <taxon>Bacteria</taxon>
        <taxon>Pseudomonadati</taxon>
        <taxon>Pseudomonadota</taxon>
        <taxon>Gammaproteobacteria</taxon>
        <taxon>Legionellales</taxon>
        <taxon>Legionellaceae</taxon>
        <taxon>Legionella</taxon>
    </lineage>
</organism>
<feature type="chain" id="PRO_0000302518" description="ATP-dependent dethiobiotin synthetase BioD">
    <location>
        <begin position="1"/>
        <end position="212"/>
    </location>
</feature>
<feature type="active site" evidence="1">
    <location>
        <position position="33"/>
    </location>
</feature>
<feature type="binding site" evidence="1">
    <location>
        <begin position="12"/>
        <end position="17"/>
    </location>
    <ligand>
        <name>ATP</name>
        <dbReference type="ChEBI" id="CHEBI:30616"/>
    </ligand>
</feature>
<feature type="binding site" evidence="1">
    <location>
        <position position="16"/>
    </location>
    <ligand>
        <name>Mg(2+)</name>
        <dbReference type="ChEBI" id="CHEBI:18420"/>
    </ligand>
</feature>
<feature type="binding site" evidence="1">
    <location>
        <position position="37"/>
    </location>
    <ligand>
        <name>substrate</name>
    </ligand>
</feature>
<feature type="binding site" evidence="1">
    <location>
        <position position="50"/>
    </location>
    <ligand>
        <name>ATP</name>
        <dbReference type="ChEBI" id="CHEBI:30616"/>
    </ligand>
</feature>
<feature type="binding site" evidence="1">
    <location>
        <position position="50"/>
    </location>
    <ligand>
        <name>Mg(2+)</name>
        <dbReference type="ChEBI" id="CHEBI:18420"/>
    </ligand>
</feature>
<feature type="binding site" evidence="1">
    <location>
        <begin position="110"/>
        <end position="113"/>
    </location>
    <ligand>
        <name>ATP</name>
        <dbReference type="ChEBI" id="CHEBI:30616"/>
    </ligand>
</feature>
<feature type="binding site" evidence="1">
    <location>
        <position position="110"/>
    </location>
    <ligand>
        <name>Mg(2+)</name>
        <dbReference type="ChEBI" id="CHEBI:18420"/>
    </ligand>
</feature>
<feature type="binding site" evidence="1">
    <location>
        <begin position="170"/>
        <end position="171"/>
    </location>
    <ligand>
        <name>ATP</name>
        <dbReference type="ChEBI" id="CHEBI:30616"/>
    </ligand>
</feature>
<comment type="function">
    <text evidence="1">Catalyzes a mechanistically unusual reaction, the ATP-dependent insertion of CO2 between the N7 and N8 nitrogen atoms of 7,8-diaminopelargonic acid (DAPA, also called 7,8-diammoniononanoate) to form a ureido ring.</text>
</comment>
<comment type="catalytic activity">
    <reaction evidence="1">
        <text>(7R,8S)-7,8-diammoniononanoate + CO2 + ATP = (4R,5S)-dethiobiotin + ADP + phosphate + 3 H(+)</text>
        <dbReference type="Rhea" id="RHEA:15805"/>
        <dbReference type="ChEBI" id="CHEBI:15378"/>
        <dbReference type="ChEBI" id="CHEBI:16526"/>
        <dbReference type="ChEBI" id="CHEBI:30616"/>
        <dbReference type="ChEBI" id="CHEBI:43474"/>
        <dbReference type="ChEBI" id="CHEBI:149469"/>
        <dbReference type="ChEBI" id="CHEBI:149473"/>
        <dbReference type="ChEBI" id="CHEBI:456216"/>
        <dbReference type="EC" id="6.3.3.3"/>
    </reaction>
</comment>
<comment type="cofactor">
    <cofactor evidence="1">
        <name>Mg(2+)</name>
        <dbReference type="ChEBI" id="CHEBI:18420"/>
    </cofactor>
</comment>
<comment type="pathway">
    <text evidence="1">Cofactor biosynthesis; biotin biosynthesis; biotin from 7,8-diaminononanoate: step 1/2.</text>
</comment>
<comment type="subunit">
    <text evidence="1">Homodimer.</text>
</comment>
<comment type="subcellular location">
    <subcellularLocation>
        <location evidence="1">Cytoplasm</location>
    </subcellularLocation>
</comment>
<comment type="similarity">
    <text evidence="1">Belongs to the dethiobiotin synthetase family.</text>
</comment>